<organism>
    <name type="scientific">Synechococcus sp. (strain WH7803)</name>
    <dbReference type="NCBI Taxonomy" id="32051"/>
    <lineage>
        <taxon>Bacteria</taxon>
        <taxon>Bacillati</taxon>
        <taxon>Cyanobacteriota</taxon>
        <taxon>Cyanophyceae</taxon>
        <taxon>Synechococcales</taxon>
        <taxon>Synechococcaceae</taxon>
        <taxon>Synechococcus</taxon>
    </lineage>
</organism>
<comment type="function">
    <text evidence="1">Component of the cytochrome b6-f complex, which mediates electron transfer between photosystem II (PSII) and photosystem I (PSI), cyclic electron flow around PSI, and state transitions.</text>
</comment>
<comment type="cofactor">
    <cofactor evidence="1">
        <name>heme b</name>
        <dbReference type="ChEBI" id="CHEBI:60344"/>
    </cofactor>
    <text evidence="1">Binds 2 heme b groups non-covalently with two histidine residues as axial ligands.</text>
</comment>
<comment type="cofactor">
    <cofactor evidence="1">
        <name>heme c</name>
        <dbReference type="ChEBI" id="CHEBI:61717"/>
    </cofactor>
    <text evidence="1">Binds one heme group covalently by a single cysteine link with no axial amino acid ligand. This heme was named heme ci.</text>
</comment>
<comment type="subunit">
    <text evidence="1">The 4 large subunits of the cytochrome b6-f complex are cytochrome b6, subunit IV (17 kDa polypeptide, PetD), cytochrome f and the Rieske protein, while the 4 small subunits are PetG, PetL, PetM and PetN. The complex functions as a dimer.</text>
</comment>
<comment type="subcellular location">
    <subcellularLocation>
        <location evidence="1">Cellular thylakoid membrane</location>
        <topology evidence="1">Multi-pass membrane protein</topology>
    </subcellularLocation>
</comment>
<comment type="miscellaneous">
    <text evidence="1">Heme 1 (or BH or b566) is high-potential and absorbs at about 566 nm, and heme 2 (or BL or b562) is low-potential and absorbs at about 562 nm.</text>
</comment>
<comment type="similarity">
    <text evidence="1">Belongs to the cytochrome b family. PetB subfamily.</text>
</comment>
<gene>
    <name evidence="1" type="primary">petB</name>
    <name type="ordered locus">SynWH7803_0533</name>
</gene>
<reference key="1">
    <citation type="submission" date="2006-05" db="EMBL/GenBank/DDBJ databases">
        <authorList>
            <consortium name="Genoscope"/>
        </authorList>
    </citation>
    <scope>NUCLEOTIDE SEQUENCE [LARGE SCALE GENOMIC DNA]</scope>
    <source>
        <strain>WH7803</strain>
    </source>
</reference>
<dbReference type="EMBL" id="CT971583">
    <property type="protein sequence ID" value="CAK22959.1"/>
    <property type="molecule type" value="Genomic_DNA"/>
</dbReference>
<dbReference type="SMR" id="A5GJ44"/>
<dbReference type="STRING" id="32051.SynWH7803_0533"/>
<dbReference type="KEGG" id="syx:SynWH7803_0533"/>
<dbReference type="eggNOG" id="COG1290">
    <property type="taxonomic scope" value="Bacteria"/>
</dbReference>
<dbReference type="HOGENOM" id="CLU_031114_0_2_3"/>
<dbReference type="OrthoDB" id="9804503at2"/>
<dbReference type="Proteomes" id="UP000001566">
    <property type="component" value="Chromosome"/>
</dbReference>
<dbReference type="GO" id="GO:0031676">
    <property type="term" value="C:plasma membrane-derived thylakoid membrane"/>
    <property type="evidence" value="ECO:0007669"/>
    <property type="project" value="UniProtKB-SubCell"/>
</dbReference>
<dbReference type="GO" id="GO:0045158">
    <property type="term" value="F:electron transporter, transferring electrons within cytochrome b6/f complex of photosystem II activity"/>
    <property type="evidence" value="ECO:0007669"/>
    <property type="project" value="UniProtKB-UniRule"/>
</dbReference>
<dbReference type="GO" id="GO:0046872">
    <property type="term" value="F:metal ion binding"/>
    <property type="evidence" value="ECO:0007669"/>
    <property type="project" value="UniProtKB-KW"/>
</dbReference>
<dbReference type="GO" id="GO:0016491">
    <property type="term" value="F:oxidoreductase activity"/>
    <property type="evidence" value="ECO:0007669"/>
    <property type="project" value="InterPro"/>
</dbReference>
<dbReference type="GO" id="GO:0015979">
    <property type="term" value="P:photosynthesis"/>
    <property type="evidence" value="ECO:0007669"/>
    <property type="project" value="UniProtKB-UniRule"/>
</dbReference>
<dbReference type="GO" id="GO:0022904">
    <property type="term" value="P:respiratory electron transport chain"/>
    <property type="evidence" value="ECO:0007669"/>
    <property type="project" value="InterPro"/>
</dbReference>
<dbReference type="CDD" id="cd00284">
    <property type="entry name" value="Cytochrome_b_N"/>
    <property type="match status" value="1"/>
</dbReference>
<dbReference type="FunFam" id="1.20.810.10:FF:000001">
    <property type="entry name" value="Cytochrome b6"/>
    <property type="match status" value="1"/>
</dbReference>
<dbReference type="Gene3D" id="1.20.810.10">
    <property type="entry name" value="Cytochrome Bc1 Complex, Chain C"/>
    <property type="match status" value="1"/>
</dbReference>
<dbReference type="HAMAP" id="MF_00633">
    <property type="entry name" value="Cytb6_f_cytb6"/>
    <property type="match status" value="1"/>
</dbReference>
<dbReference type="InterPro" id="IPR005797">
    <property type="entry name" value="Cyt_b/b6_N"/>
</dbReference>
<dbReference type="InterPro" id="IPR023530">
    <property type="entry name" value="Cyt_B6_PetB"/>
</dbReference>
<dbReference type="InterPro" id="IPR027387">
    <property type="entry name" value="Cytb/b6-like_sf"/>
</dbReference>
<dbReference type="InterPro" id="IPR048259">
    <property type="entry name" value="Cytochrome_b_N_euk/bac"/>
</dbReference>
<dbReference type="InterPro" id="IPR016174">
    <property type="entry name" value="Di-haem_cyt_TM"/>
</dbReference>
<dbReference type="NCBIfam" id="NF002990">
    <property type="entry name" value="PRK03735.1"/>
    <property type="match status" value="1"/>
</dbReference>
<dbReference type="PANTHER" id="PTHR19271">
    <property type="entry name" value="CYTOCHROME B"/>
    <property type="match status" value="1"/>
</dbReference>
<dbReference type="PANTHER" id="PTHR19271:SF16">
    <property type="entry name" value="CYTOCHROME B"/>
    <property type="match status" value="1"/>
</dbReference>
<dbReference type="Pfam" id="PF00033">
    <property type="entry name" value="Cytochrome_B"/>
    <property type="match status" value="1"/>
</dbReference>
<dbReference type="PIRSF" id="PIRSF000032">
    <property type="entry name" value="Cytochrome_b6"/>
    <property type="match status" value="1"/>
</dbReference>
<dbReference type="SUPFAM" id="SSF81342">
    <property type="entry name" value="Transmembrane di-heme cytochromes"/>
    <property type="match status" value="1"/>
</dbReference>
<dbReference type="PROSITE" id="PS51002">
    <property type="entry name" value="CYTB_NTER"/>
    <property type="match status" value="1"/>
</dbReference>
<proteinExistence type="inferred from homology"/>
<accession>A5GJ44</accession>
<evidence type="ECO:0000255" key="1">
    <source>
        <dbReference type="HAMAP-Rule" id="MF_00633"/>
    </source>
</evidence>
<sequence length="218" mass="24657">MANSSPVYDWFQERLEIQDIADDISSKYVPPHVNIFYCLGGITLVCFLIQFATGFAMTFYYKPTVAEAYSSVQYLMTDVSFGWLIRSVHRWSASMMVLMLILHVFRVYLTGGFKRPRELTWVTGVTMAVITVSFGVTGYSLPWDQVGYWAVKIVSGVPAAIPVVGDFMVELLRGGESVGQSTLTRFYSLHTFVMPWLLAVFMLMHFLMIRKQGISGPL</sequence>
<protein>
    <recommendedName>
        <fullName evidence="1">Cytochrome b6</fullName>
    </recommendedName>
</protein>
<keyword id="KW-0249">Electron transport</keyword>
<keyword id="KW-0349">Heme</keyword>
<keyword id="KW-0408">Iron</keyword>
<keyword id="KW-0472">Membrane</keyword>
<keyword id="KW-0479">Metal-binding</keyword>
<keyword id="KW-0602">Photosynthesis</keyword>
<keyword id="KW-1185">Reference proteome</keyword>
<keyword id="KW-0793">Thylakoid</keyword>
<keyword id="KW-0812">Transmembrane</keyword>
<keyword id="KW-1133">Transmembrane helix</keyword>
<keyword id="KW-0813">Transport</keyword>
<name>CYB6_SYNPW</name>
<feature type="chain" id="PRO_1000061416" description="Cytochrome b6">
    <location>
        <begin position="1"/>
        <end position="218"/>
    </location>
</feature>
<feature type="transmembrane region" description="Helical" evidence="1">
    <location>
        <begin position="35"/>
        <end position="55"/>
    </location>
</feature>
<feature type="transmembrane region" description="Helical" evidence="1">
    <location>
        <begin position="93"/>
        <end position="113"/>
    </location>
</feature>
<feature type="transmembrane region" description="Helical" evidence="1">
    <location>
        <begin position="119"/>
        <end position="139"/>
    </location>
</feature>
<feature type="transmembrane region" description="Helical" evidence="1">
    <location>
        <begin position="189"/>
        <end position="209"/>
    </location>
</feature>
<feature type="binding site" description="covalent" evidence="1">
    <location>
        <position position="38"/>
    </location>
    <ligand>
        <name>heme c</name>
        <dbReference type="ChEBI" id="CHEBI:61717"/>
    </ligand>
</feature>
<feature type="binding site" description="axial binding residue" evidence="1">
    <location>
        <position position="89"/>
    </location>
    <ligand>
        <name>heme b</name>
        <dbReference type="ChEBI" id="CHEBI:60344"/>
        <label>2</label>
    </ligand>
    <ligandPart>
        <name>Fe</name>
        <dbReference type="ChEBI" id="CHEBI:18248"/>
    </ligandPart>
</feature>
<feature type="binding site" description="axial binding residue" evidence="1">
    <location>
        <position position="103"/>
    </location>
    <ligand>
        <name>heme b</name>
        <dbReference type="ChEBI" id="CHEBI:60344"/>
        <label>1</label>
    </ligand>
    <ligandPart>
        <name>Fe</name>
        <dbReference type="ChEBI" id="CHEBI:18248"/>
    </ligandPart>
</feature>
<feature type="binding site" description="axial binding residue" evidence="1">
    <location>
        <position position="190"/>
    </location>
    <ligand>
        <name>heme b</name>
        <dbReference type="ChEBI" id="CHEBI:60344"/>
        <label>2</label>
    </ligand>
    <ligandPart>
        <name>Fe</name>
        <dbReference type="ChEBI" id="CHEBI:18248"/>
    </ligandPart>
</feature>
<feature type="binding site" description="axial binding residue" evidence="1">
    <location>
        <position position="205"/>
    </location>
    <ligand>
        <name>heme b</name>
        <dbReference type="ChEBI" id="CHEBI:60344"/>
        <label>1</label>
    </ligand>
    <ligandPart>
        <name>Fe</name>
        <dbReference type="ChEBI" id="CHEBI:18248"/>
    </ligandPart>
</feature>